<dbReference type="EC" id="2.7.7.60" evidence="1"/>
<dbReference type="EMBL" id="AE002098">
    <property type="protein sequence ID" value="AAF41869.1"/>
    <property type="molecule type" value="Genomic_DNA"/>
</dbReference>
<dbReference type="PIR" id="H81073">
    <property type="entry name" value="H81073"/>
</dbReference>
<dbReference type="RefSeq" id="NP_274521.1">
    <property type="nucleotide sequence ID" value="NC_003112.2"/>
</dbReference>
<dbReference type="RefSeq" id="WP_002225068.1">
    <property type="nucleotide sequence ID" value="NC_003112.2"/>
</dbReference>
<dbReference type="SMR" id="Q9JYM4"/>
<dbReference type="FunCoup" id="Q9JYM4">
    <property type="interactions" value="456"/>
</dbReference>
<dbReference type="STRING" id="122586.NMB1513"/>
<dbReference type="PaxDb" id="122586-NMB1513"/>
<dbReference type="KEGG" id="nme:NMB1513"/>
<dbReference type="PATRIC" id="fig|122586.8.peg.1917"/>
<dbReference type="HOGENOM" id="CLU_061281_3_0_4"/>
<dbReference type="InParanoid" id="Q9JYM4"/>
<dbReference type="OrthoDB" id="9806837at2"/>
<dbReference type="UniPathway" id="UPA00056">
    <property type="reaction ID" value="UER00093"/>
</dbReference>
<dbReference type="Proteomes" id="UP000000425">
    <property type="component" value="Chromosome"/>
</dbReference>
<dbReference type="GO" id="GO:0050518">
    <property type="term" value="F:2-C-methyl-D-erythritol 4-phosphate cytidylyltransferase activity"/>
    <property type="evidence" value="ECO:0000318"/>
    <property type="project" value="GO_Central"/>
</dbReference>
<dbReference type="GO" id="GO:0019288">
    <property type="term" value="P:isopentenyl diphosphate biosynthetic process, methylerythritol 4-phosphate pathway"/>
    <property type="evidence" value="ECO:0007669"/>
    <property type="project" value="UniProtKB-UniRule"/>
</dbReference>
<dbReference type="CDD" id="cd02516">
    <property type="entry name" value="CDP-ME_synthetase"/>
    <property type="match status" value="1"/>
</dbReference>
<dbReference type="FunFam" id="3.90.550.10:FF:000003">
    <property type="entry name" value="2-C-methyl-D-erythritol 4-phosphate cytidylyltransferase"/>
    <property type="match status" value="1"/>
</dbReference>
<dbReference type="Gene3D" id="3.90.550.10">
    <property type="entry name" value="Spore Coat Polysaccharide Biosynthesis Protein SpsA, Chain A"/>
    <property type="match status" value="1"/>
</dbReference>
<dbReference type="HAMAP" id="MF_00108">
    <property type="entry name" value="IspD"/>
    <property type="match status" value="1"/>
</dbReference>
<dbReference type="InterPro" id="IPR001228">
    <property type="entry name" value="IspD"/>
</dbReference>
<dbReference type="InterPro" id="IPR034683">
    <property type="entry name" value="IspD/TarI"/>
</dbReference>
<dbReference type="InterPro" id="IPR050088">
    <property type="entry name" value="IspD/TarI_cytidylyltransf_bact"/>
</dbReference>
<dbReference type="InterPro" id="IPR018294">
    <property type="entry name" value="ISPD_synthase_CS"/>
</dbReference>
<dbReference type="InterPro" id="IPR029044">
    <property type="entry name" value="Nucleotide-diphossugar_trans"/>
</dbReference>
<dbReference type="NCBIfam" id="TIGR00453">
    <property type="entry name" value="ispD"/>
    <property type="match status" value="1"/>
</dbReference>
<dbReference type="PANTHER" id="PTHR32125">
    <property type="entry name" value="2-C-METHYL-D-ERYTHRITOL 4-PHOSPHATE CYTIDYLYLTRANSFERASE, CHLOROPLASTIC"/>
    <property type="match status" value="1"/>
</dbReference>
<dbReference type="PANTHER" id="PTHR32125:SF4">
    <property type="entry name" value="2-C-METHYL-D-ERYTHRITOL 4-PHOSPHATE CYTIDYLYLTRANSFERASE, CHLOROPLASTIC"/>
    <property type="match status" value="1"/>
</dbReference>
<dbReference type="Pfam" id="PF01128">
    <property type="entry name" value="IspD"/>
    <property type="match status" value="1"/>
</dbReference>
<dbReference type="SUPFAM" id="SSF53448">
    <property type="entry name" value="Nucleotide-diphospho-sugar transferases"/>
    <property type="match status" value="1"/>
</dbReference>
<dbReference type="PROSITE" id="PS01295">
    <property type="entry name" value="ISPD"/>
    <property type="match status" value="1"/>
</dbReference>
<keyword id="KW-0414">Isoprene biosynthesis</keyword>
<keyword id="KW-0548">Nucleotidyltransferase</keyword>
<keyword id="KW-1185">Reference proteome</keyword>
<keyword id="KW-0808">Transferase</keyword>
<organism>
    <name type="scientific">Neisseria meningitidis serogroup B (strain ATCC BAA-335 / MC58)</name>
    <dbReference type="NCBI Taxonomy" id="122586"/>
    <lineage>
        <taxon>Bacteria</taxon>
        <taxon>Pseudomonadati</taxon>
        <taxon>Pseudomonadota</taxon>
        <taxon>Betaproteobacteria</taxon>
        <taxon>Neisseriales</taxon>
        <taxon>Neisseriaceae</taxon>
        <taxon>Neisseria</taxon>
    </lineage>
</organism>
<sequence>MKRKNIALIPAAGIGARFGADKPKQYVEIGSKTVLEHTIGIFERHEAVDLTVVVVSPEDTFADKVQTAFPQVRVWKNGGQTRAETVRNGVAKLLETGLAAETDNILVHDAARCCLPSEALTRLIEQAGNAAEGGILAIPIADTLKCADGGNISATVERTSLWQAQTPQLFRAGLLHRALAAENLDGITDEASAVEKLGVRPLLIQGDVRNLKLTQPQDAYIVRLLLDAV</sequence>
<comment type="function">
    <text evidence="1">Catalyzes the formation of 4-diphosphocytidyl-2-C-methyl-D-erythritol from CTP and 2-C-methyl-D-erythritol 4-phosphate (MEP).</text>
</comment>
<comment type="catalytic activity">
    <reaction evidence="1">
        <text>2-C-methyl-D-erythritol 4-phosphate + CTP + H(+) = 4-CDP-2-C-methyl-D-erythritol + diphosphate</text>
        <dbReference type="Rhea" id="RHEA:13429"/>
        <dbReference type="ChEBI" id="CHEBI:15378"/>
        <dbReference type="ChEBI" id="CHEBI:33019"/>
        <dbReference type="ChEBI" id="CHEBI:37563"/>
        <dbReference type="ChEBI" id="CHEBI:57823"/>
        <dbReference type="ChEBI" id="CHEBI:58262"/>
        <dbReference type="EC" id="2.7.7.60"/>
    </reaction>
</comment>
<comment type="pathway">
    <text evidence="1">Isoprenoid biosynthesis; isopentenyl diphosphate biosynthesis via DXP pathway; isopentenyl diphosphate from 1-deoxy-D-xylulose 5-phosphate: step 2/6.</text>
</comment>
<comment type="similarity">
    <text evidence="1">Belongs to the IspD/TarI cytidylyltransferase family. IspD subfamily.</text>
</comment>
<protein>
    <recommendedName>
        <fullName evidence="1">2-C-methyl-D-erythritol 4-phosphate cytidylyltransferase</fullName>
        <ecNumber evidence="1">2.7.7.60</ecNumber>
    </recommendedName>
    <alternativeName>
        <fullName evidence="1">4-diphosphocytidyl-2C-methyl-D-erythritol synthase</fullName>
    </alternativeName>
    <alternativeName>
        <fullName evidence="1">MEP cytidylyltransferase</fullName>
        <shortName evidence="1">MCT</shortName>
    </alternativeName>
</protein>
<gene>
    <name evidence="1" type="primary">ispD</name>
    <name type="ordered locus">NMB1513</name>
</gene>
<evidence type="ECO:0000255" key="1">
    <source>
        <dbReference type="HAMAP-Rule" id="MF_00108"/>
    </source>
</evidence>
<accession>Q9JYM4</accession>
<reference key="1">
    <citation type="journal article" date="2000" name="Science">
        <title>Complete genome sequence of Neisseria meningitidis serogroup B strain MC58.</title>
        <authorList>
            <person name="Tettelin H."/>
            <person name="Saunders N.J."/>
            <person name="Heidelberg J.F."/>
            <person name="Jeffries A.C."/>
            <person name="Nelson K.E."/>
            <person name="Eisen J.A."/>
            <person name="Ketchum K.A."/>
            <person name="Hood D.W."/>
            <person name="Peden J.F."/>
            <person name="Dodson R.J."/>
            <person name="Nelson W.C."/>
            <person name="Gwinn M.L."/>
            <person name="DeBoy R.T."/>
            <person name="Peterson J.D."/>
            <person name="Hickey E.K."/>
            <person name="Haft D.H."/>
            <person name="Salzberg S.L."/>
            <person name="White O."/>
            <person name="Fleischmann R.D."/>
            <person name="Dougherty B.A."/>
            <person name="Mason T.M."/>
            <person name="Ciecko A."/>
            <person name="Parksey D.S."/>
            <person name="Blair E."/>
            <person name="Cittone H."/>
            <person name="Clark E.B."/>
            <person name="Cotton M.D."/>
            <person name="Utterback T.R."/>
            <person name="Khouri H.M."/>
            <person name="Qin H."/>
            <person name="Vamathevan J.J."/>
            <person name="Gill J."/>
            <person name="Scarlato V."/>
            <person name="Masignani V."/>
            <person name="Pizza M."/>
            <person name="Grandi G."/>
            <person name="Sun L."/>
            <person name="Smith H.O."/>
            <person name="Fraser C.M."/>
            <person name="Moxon E.R."/>
            <person name="Rappuoli R."/>
            <person name="Venter J.C."/>
        </authorList>
    </citation>
    <scope>NUCLEOTIDE SEQUENCE [LARGE SCALE GENOMIC DNA]</scope>
    <source>
        <strain>ATCC BAA-335 / MC58</strain>
    </source>
</reference>
<proteinExistence type="inferred from homology"/>
<name>ISPD_NEIMB</name>
<feature type="chain" id="PRO_0000075594" description="2-C-methyl-D-erythritol 4-phosphate cytidylyltransferase">
    <location>
        <begin position="1"/>
        <end position="229"/>
    </location>
</feature>
<feature type="site" description="Transition state stabilizer" evidence="1">
    <location>
        <position position="17"/>
    </location>
</feature>
<feature type="site" description="Transition state stabilizer" evidence="1">
    <location>
        <position position="24"/>
    </location>
</feature>
<feature type="site" description="Positions MEP for the nucleophilic attack" evidence="1">
    <location>
        <position position="158"/>
    </location>
</feature>
<feature type="site" description="Positions MEP for the nucleophilic attack" evidence="1">
    <location>
        <position position="212"/>
    </location>
</feature>